<protein>
    <recommendedName>
        <fullName>RNA-binding protein NOB1</fullName>
        <ecNumber evidence="2">3.1.-.-</ecNumber>
    </recommendedName>
</protein>
<sequence>MAPVEHVVADAGAFLLDAALQDIGKNIYTIRNVISEIRDKATRRRLAVLPYELRFKEPFPEYVRLVTEFSKKTGDYPSLSATDIQVLALTYQLEAEFVGVSHLKQEPEKVKVSSSIQHPETPLHVSGFHLPSKPKPPRETVEHRHPASEPEDLEFSSFMFWRNPLPNIDCELQELLMDGGEDVPNEEEDEENGLDERQDEDSDDDGGGWITPSNIKQIQQEMKQCAVPKDVRVGCVTTDFAMQNVLLQMGLHVLAVNGMLIREARSYILRCHGCFKTTSDMSRVFCAHCGNKTLKKVSVTVSDDGTLHMHFSRNPKVLNPRGLRYSLPTPKGGKYAINPHLTEDQRFPQLRLSRKARQKTDVFAPDYVAGVSPFAENDISSRSATLQVRDSTLGAGRRRLNPNASRKKFVKKR</sequence>
<comment type="function">
    <text evidence="2 3">May play a role in mRNA degradation (By similarity). Endonuclease required for processing of 20S pre-rRNA precursor and biogenesis of 40S ribosomal subunits (By similarity).</text>
</comment>
<comment type="subunit">
    <text evidence="2 3">May interact with UPF2 (By similarity). Component of the small ribosomal subunit, ribosomal RNA processing complex (SSU RRP complex) (By similarity).</text>
</comment>
<comment type="subcellular location">
    <subcellularLocation>
        <location evidence="3">Nucleus</location>
    </subcellularLocation>
</comment>
<comment type="similarity">
    <text evidence="6">Belongs to the NOB1 family.</text>
</comment>
<keyword id="KW-0255">Endonuclease</keyword>
<keyword id="KW-0378">Hydrolase</keyword>
<keyword id="KW-0479">Metal-binding</keyword>
<keyword id="KW-0540">Nuclease</keyword>
<keyword id="KW-0539">Nucleus</keyword>
<keyword id="KW-0597">Phosphoprotein</keyword>
<keyword id="KW-1185">Reference proteome</keyword>
<keyword id="KW-0862">Zinc</keyword>
<keyword id="KW-0863">Zinc-finger</keyword>
<organism>
    <name type="scientific">Bos taurus</name>
    <name type="common">Bovine</name>
    <dbReference type="NCBI Taxonomy" id="9913"/>
    <lineage>
        <taxon>Eukaryota</taxon>
        <taxon>Metazoa</taxon>
        <taxon>Chordata</taxon>
        <taxon>Craniata</taxon>
        <taxon>Vertebrata</taxon>
        <taxon>Euteleostomi</taxon>
        <taxon>Mammalia</taxon>
        <taxon>Eutheria</taxon>
        <taxon>Laurasiatheria</taxon>
        <taxon>Artiodactyla</taxon>
        <taxon>Ruminantia</taxon>
        <taxon>Pecora</taxon>
        <taxon>Bovidae</taxon>
        <taxon>Bovinae</taxon>
        <taxon>Bos</taxon>
    </lineage>
</organism>
<name>NOB1_BOVIN</name>
<dbReference type="EC" id="3.1.-.-" evidence="2"/>
<dbReference type="EMBL" id="AY336977">
    <property type="protein sequence ID" value="AAQ16153.1"/>
    <property type="molecule type" value="mRNA"/>
</dbReference>
<dbReference type="EMBL" id="BC102577">
    <property type="protein sequence ID" value="AAI02578.1"/>
    <property type="molecule type" value="mRNA"/>
</dbReference>
<dbReference type="RefSeq" id="NP_898906.1">
    <property type="nucleotide sequence ID" value="NM_183083.1"/>
</dbReference>
<dbReference type="SMR" id="Q3T042"/>
<dbReference type="FunCoup" id="Q3T042">
    <property type="interactions" value="3395"/>
</dbReference>
<dbReference type="STRING" id="9913.ENSBTAP00000070112"/>
<dbReference type="PaxDb" id="9913-ENSBTAP00000027497"/>
<dbReference type="GeneID" id="360191"/>
<dbReference type="KEGG" id="bta:360191"/>
<dbReference type="CTD" id="28987"/>
<dbReference type="eggNOG" id="KOG2463">
    <property type="taxonomic scope" value="Eukaryota"/>
</dbReference>
<dbReference type="InParanoid" id="Q3T042"/>
<dbReference type="OrthoDB" id="446759at2759"/>
<dbReference type="Proteomes" id="UP000009136">
    <property type="component" value="Unplaced"/>
</dbReference>
<dbReference type="GO" id="GO:0005634">
    <property type="term" value="C:nucleus"/>
    <property type="evidence" value="ECO:0007669"/>
    <property type="project" value="UniProtKB-SubCell"/>
</dbReference>
<dbReference type="GO" id="GO:0030688">
    <property type="term" value="C:preribosome, small subunit precursor"/>
    <property type="evidence" value="ECO:0000318"/>
    <property type="project" value="GO_Central"/>
</dbReference>
<dbReference type="GO" id="GO:0004521">
    <property type="term" value="F:RNA endonuclease activity"/>
    <property type="evidence" value="ECO:0000318"/>
    <property type="project" value="GO_Central"/>
</dbReference>
<dbReference type="GO" id="GO:0008270">
    <property type="term" value="F:zinc ion binding"/>
    <property type="evidence" value="ECO:0007669"/>
    <property type="project" value="UniProtKB-KW"/>
</dbReference>
<dbReference type="GO" id="GO:0030490">
    <property type="term" value="P:maturation of SSU-rRNA"/>
    <property type="evidence" value="ECO:0000318"/>
    <property type="project" value="GO_Central"/>
</dbReference>
<dbReference type="CDD" id="cd09876">
    <property type="entry name" value="PIN_Nob1-like"/>
    <property type="match status" value="1"/>
</dbReference>
<dbReference type="FunFam" id="3.40.50.1010:FF:000018">
    <property type="entry name" value="RNA-binding protein NOB1"/>
    <property type="match status" value="1"/>
</dbReference>
<dbReference type="Gene3D" id="3.40.50.1010">
    <property type="entry name" value="5'-nuclease"/>
    <property type="match status" value="1"/>
</dbReference>
<dbReference type="Gene3D" id="6.20.210.10">
    <property type="entry name" value="Nin one binding (NOB1), Zn-ribbon-like"/>
    <property type="match status" value="1"/>
</dbReference>
<dbReference type="InterPro" id="IPR039907">
    <property type="entry name" value="NOB1"/>
</dbReference>
<dbReference type="InterPro" id="IPR017117">
    <property type="entry name" value="Nob1_euk"/>
</dbReference>
<dbReference type="InterPro" id="IPR036283">
    <property type="entry name" value="NOB1_Zf-like_sf"/>
</dbReference>
<dbReference type="InterPro" id="IPR014881">
    <property type="entry name" value="NOB1_Zn-bd"/>
</dbReference>
<dbReference type="InterPro" id="IPR002716">
    <property type="entry name" value="PIN_dom"/>
</dbReference>
<dbReference type="InterPro" id="IPR033411">
    <property type="entry name" value="Ribonuclease_PIN"/>
</dbReference>
<dbReference type="InterPro" id="IPR033461">
    <property type="entry name" value="WRNPLPNID"/>
</dbReference>
<dbReference type="PANTHER" id="PTHR12814">
    <property type="entry name" value="RNA-BINDING PROTEIN NOB1"/>
    <property type="match status" value="1"/>
</dbReference>
<dbReference type="PANTHER" id="PTHR12814:SF2">
    <property type="entry name" value="RNA-BINDING PROTEIN NOB1"/>
    <property type="match status" value="1"/>
</dbReference>
<dbReference type="Pfam" id="PF17146">
    <property type="entry name" value="PIN_6"/>
    <property type="match status" value="1"/>
</dbReference>
<dbReference type="Pfam" id="PF15017">
    <property type="entry name" value="WRNPLPNID"/>
    <property type="match status" value="1"/>
</dbReference>
<dbReference type="Pfam" id="PF08772">
    <property type="entry name" value="Zn_ribbon_NOB1"/>
    <property type="match status" value="1"/>
</dbReference>
<dbReference type="PIRSF" id="PIRSF037125">
    <property type="entry name" value="D-site_20S_pre-rRNA_nuclease"/>
    <property type="match status" value="1"/>
</dbReference>
<dbReference type="SMART" id="SM00670">
    <property type="entry name" value="PINc"/>
    <property type="match status" value="1"/>
</dbReference>
<dbReference type="SUPFAM" id="SSF144206">
    <property type="entry name" value="NOB1 zinc finger-like"/>
    <property type="match status" value="1"/>
</dbReference>
<proteinExistence type="evidence at transcript level"/>
<gene>
    <name type="primary">NOB1</name>
</gene>
<feature type="chain" id="PRO_0000233264" description="RNA-binding protein NOB1">
    <location>
        <begin position="1"/>
        <end position="413"/>
    </location>
</feature>
<feature type="domain" description="PINc" evidence="4">
    <location>
        <begin position="5"/>
        <end position="108"/>
    </location>
</feature>
<feature type="zinc finger region" description="NOB1" evidence="4">
    <location>
        <begin position="261"/>
        <end position="333"/>
    </location>
</feature>
<feature type="region of interest" description="Disordered" evidence="5">
    <location>
        <begin position="116"/>
        <end position="150"/>
    </location>
</feature>
<feature type="region of interest" description="Disordered" evidence="5">
    <location>
        <begin position="181"/>
        <end position="212"/>
    </location>
</feature>
<feature type="region of interest" description="Disordered" evidence="5">
    <location>
        <begin position="390"/>
        <end position="413"/>
    </location>
</feature>
<feature type="compositionally biased region" description="Basic and acidic residues" evidence="5">
    <location>
        <begin position="136"/>
        <end position="148"/>
    </location>
</feature>
<feature type="compositionally biased region" description="Acidic residues" evidence="5">
    <location>
        <begin position="181"/>
        <end position="206"/>
    </location>
</feature>
<feature type="compositionally biased region" description="Basic residues" evidence="5">
    <location>
        <begin position="396"/>
        <end position="413"/>
    </location>
</feature>
<feature type="binding site" evidence="1">
    <location>
        <position position="271"/>
    </location>
    <ligand>
        <name>Zn(2+)</name>
        <dbReference type="ChEBI" id="CHEBI:29105"/>
    </ligand>
</feature>
<feature type="binding site" evidence="1">
    <location>
        <position position="274"/>
    </location>
    <ligand>
        <name>Zn(2+)</name>
        <dbReference type="ChEBI" id="CHEBI:29105"/>
    </ligand>
</feature>
<feature type="binding site" evidence="1">
    <location>
        <position position="286"/>
    </location>
    <ligand>
        <name>Zn(2+)</name>
        <dbReference type="ChEBI" id="CHEBI:29105"/>
    </ligand>
</feature>
<feature type="binding site" evidence="1">
    <location>
        <position position="289"/>
    </location>
    <ligand>
        <name>Zn(2+)</name>
        <dbReference type="ChEBI" id="CHEBI:29105"/>
    </ligand>
</feature>
<feature type="modified residue" description="Phosphoserine" evidence="3">
    <location>
        <position position="202"/>
    </location>
</feature>
<feature type="modified residue" description="Phosphoserine" evidence="3">
    <location>
        <position position="326"/>
    </location>
</feature>
<feature type="modified residue" description="Phosphoserine" evidence="3">
    <location>
        <position position="353"/>
    </location>
</feature>
<feature type="sequence conflict" description="In Ref. 1; AAQ16153." evidence="6" ref="1">
    <original>Q</original>
    <variation>S</variation>
    <location>
        <position position="349"/>
    </location>
</feature>
<feature type="sequence conflict" description="In Ref. 1; AAQ16153." evidence="6" ref="1">
    <original>A</original>
    <variation>G</variation>
    <location>
        <position position="356"/>
    </location>
</feature>
<feature type="sequence conflict" description="In Ref. 1; AAQ16153." evidence="6" ref="1">
    <original>V</original>
    <variation>G</variation>
    <location>
        <position position="362"/>
    </location>
</feature>
<accession>Q3T042</accession>
<accession>Q7YRC5</accession>
<evidence type="ECO:0000250" key="1">
    <source>
        <dbReference type="UniProtKB" id="Q8BW10"/>
    </source>
</evidence>
<evidence type="ECO:0000250" key="2">
    <source>
        <dbReference type="UniProtKB" id="Q9FLL1"/>
    </source>
</evidence>
<evidence type="ECO:0000250" key="3">
    <source>
        <dbReference type="UniProtKB" id="Q9ULX3"/>
    </source>
</evidence>
<evidence type="ECO:0000255" key="4"/>
<evidence type="ECO:0000256" key="5">
    <source>
        <dbReference type="SAM" id="MobiDB-lite"/>
    </source>
</evidence>
<evidence type="ECO:0000305" key="6"/>
<reference key="1">
    <citation type="submission" date="2003-07" db="EMBL/GenBank/DDBJ databases">
        <title>Cloning of Bos taurus nin one binding protein (Nob1p).</title>
        <authorList>
            <person name="Zhou G."/>
            <person name="Li W."/>
            <person name="Yu L."/>
        </authorList>
    </citation>
    <scope>NUCLEOTIDE SEQUENCE [MRNA]</scope>
</reference>
<reference key="2">
    <citation type="submission" date="2005-08" db="EMBL/GenBank/DDBJ databases">
        <authorList>
            <consortium name="NIH - Mammalian Gene Collection (MGC) project"/>
        </authorList>
    </citation>
    <scope>NUCLEOTIDE SEQUENCE [LARGE SCALE MRNA]</scope>
    <source>
        <strain>Crossbred X Angus</strain>
        <tissue>Ileum</tissue>
    </source>
</reference>